<feature type="chain" id="PRO_0000414854" description="Zinc finger MYND domain-containing protein 15">
    <location>
        <begin position="1"/>
        <end position="736"/>
    </location>
</feature>
<feature type="zinc finger region" description="MYND-type" evidence="1">
    <location>
        <begin position="307"/>
        <end position="353"/>
    </location>
</feature>
<feature type="region of interest" description="Disordered" evidence="2">
    <location>
        <begin position="70"/>
        <end position="94"/>
    </location>
</feature>
<feature type="region of interest" description="Disordered" evidence="2">
    <location>
        <begin position="109"/>
        <end position="192"/>
    </location>
</feature>
<feature type="region of interest" description="Disordered" evidence="2">
    <location>
        <begin position="556"/>
        <end position="583"/>
    </location>
</feature>
<feature type="region of interest" description="Disordered" evidence="2">
    <location>
        <begin position="696"/>
        <end position="736"/>
    </location>
</feature>
<feature type="compositionally biased region" description="Acidic residues" evidence="2">
    <location>
        <begin position="110"/>
        <end position="123"/>
    </location>
</feature>
<feature type="compositionally biased region" description="Basic and acidic residues" evidence="2">
    <location>
        <begin position="124"/>
        <end position="135"/>
    </location>
</feature>
<feature type="compositionally biased region" description="Basic and acidic residues" evidence="2">
    <location>
        <begin position="165"/>
        <end position="185"/>
    </location>
</feature>
<feature type="compositionally biased region" description="Pro residues" evidence="2">
    <location>
        <begin position="704"/>
        <end position="718"/>
    </location>
</feature>
<feature type="compositionally biased region" description="Basic residues" evidence="2">
    <location>
        <begin position="719"/>
        <end position="736"/>
    </location>
</feature>
<feature type="binding site" evidence="1">
    <location>
        <position position="307"/>
    </location>
    <ligand>
        <name>Zn(2+)</name>
        <dbReference type="ChEBI" id="CHEBI:29105"/>
        <label>1</label>
    </ligand>
</feature>
<feature type="binding site" evidence="1">
    <location>
        <position position="310"/>
    </location>
    <ligand>
        <name>Zn(2+)</name>
        <dbReference type="ChEBI" id="CHEBI:29105"/>
        <label>1</label>
    </ligand>
</feature>
<feature type="binding site" evidence="1">
    <location>
        <position position="322"/>
    </location>
    <ligand>
        <name>Zn(2+)</name>
        <dbReference type="ChEBI" id="CHEBI:29105"/>
        <label>2</label>
    </ligand>
</feature>
<feature type="binding site" evidence="1">
    <location>
        <position position="325"/>
    </location>
    <ligand>
        <name>Zn(2+)</name>
        <dbReference type="ChEBI" id="CHEBI:29105"/>
        <label>2</label>
    </ligand>
</feature>
<feature type="binding site" evidence="1">
    <location>
        <position position="331"/>
    </location>
    <ligand>
        <name>Zn(2+)</name>
        <dbReference type="ChEBI" id="CHEBI:29105"/>
        <label>1</label>
    </ligand>
</feature>
<feature type="binding site" evidence="1">
    <location>
        <position position="335"/>
    </location>
    <ligand>
        <name>Zn(2+)</name>
        <dbReference type="ChEBI" id="CHEBI:29105"/>
        <label>1</label>
    </ligand>
</feature>
<feature type="binding site" evidence="1">
    <location>
        <position position="349"/>
    </location>
    <ligand>
        <name>Zn(2+)</name>
        <dbReference type="ChEBI" id="CHEBI:29105"/>
        <label>2</label>
    </ligand>
</feature>
<feature type="binding site" evidence="1">
    <location>
        <position position="353"/>
    </location>
    <ligand>
        <name>Zn(2+)</name>
        <dbReference type="ChEBI" id="CHEBI:29105"/>
        <label>2</label>
    </ligand>
</feature>
<feature type="splice variant" id="VSP_042145" description="In isoform 2." evidence="4">
    <location>
        <begin position="1"/>
        <end position="129"/>
    </location>
</feature>
<feature type="splice variant" id="VSP_042146" description="In isoform 2." evidence="4">
    <location>
        <position position="191"/>
    </location>
</feature>
<feature type="sequence conflict" description="In Ref. 1; BAE42737." evidence="5" ref="1">
    <original>C</original>
    <variation>S</variation>
    <location>
        <position position="200"/>
    </location>
</feature>
<name>ZMY15_MOUSE</name>
<evidence type="ECO:0000255" key="1">
    <source>
        <dbReference type="PROSITE-ProRule" id="PRU00134"/>
    </source>
</evidence>
<evidence type="ECO:0000256" key="2">
    <source>
        <dbReference type="SAM" id="MobiDB-lite"/>
    </source>
</evidence>
<evidence type="ECO:0000269" key="3">
    <source>
    </source>
</evidence>
<evidence type="ECO:0000303" key="4">
    <source>
    </source>
</evidence>
<evidence type="ECO:0000305" key="5"/>
<dbReference type="EMBL" id="AK029988">
    <property type="protein sequence ID" value="BAC26719.1"/>
    <property type="molecule type" value="mRNA"/>
</dbReference>
<dbReference type="EMBL" id="AK171931">
    <property type="protein sequence ID" value="BAE42737.1"/>
    <property type="molecule type" value="mRNA"/>
</dbReference>
<dbReference type="EMBL" id="AL596096">
    <property type="status" value="NOT_ANNOTATED_CDS"/>
    <property type="molecule type" value="Genomic_DNA"/>
</dbReference>
<dbReference type="EMBL" id="BC151086">
    <property type="protein sequence ID" value="AAI51087.1"/>
    <property type="molecule type" value="mRNA"/>
</dbReference>
<dbReference type="CCDS" id="CCDS24949.1">
    <molecule id="Q8C0R7-1"/>
</dbReference>
<dbReference type="CCDS" id="CCDS88182.1">
    <molecule id="Q8C0R7-2"/>
</dbReference>
<dbReference type="RefSeq" id="NP_001025100.1">
    <molecule id="Q8C0R7-1"/>
    <property type="nucleotide sequence ID" value="NM_001029929.3"/>
</dbReference>
<dbReference type="RefSeq" id="NP_001335266.1">
    <molecule id="Q8C0R7-2"/>
    <property type="nucleotide sequence ID" value="NM_001348337.1"/>
</dbReference>
<dbReference type="FunCoup" id="Q8C0R7">
    <property type="interactions" value="146"/>
</dbReference>
<dbReference type="STRING" id="10090.ENSMUSP00000048816"/>
<dbReference type="GlyGen" id="Q8C0R7">
    <property type="glycosylation" value="1 site"/>
</dbReference>
<dbReference type="PhosphoSitePlus" id="Q8C0R7"/>
<dbReference type="PaxDb" id="10090-ENSMUSP00000048816"/>
<dbReference type="ProteomicsDB" id="275066">
    <molecule id="Q8C0R7-1"/>
</dbReference>
<dbReference type="ProteomicsDB" id="275067">
    <molecule id="Q8C0R7-2"/>
</dbReference>
<dbReference type="Antibodypedia" id="11307">
    <property type="antibodies" value="15 antibodies from 8 providers"/>
</dbReference>
<dbReference type="DNASU" id="574428"/>
<dbReference type="Ensembl" id="ENSMUST00000039093.10">
    <molecule id="Q8C0R7-1"/>
    <property type="protein sequence ID" value="ENSMUSP00000048816.4"/>
    <property type="gene ID" value="ENSMUSG00000040829.15"/>
</dbReference>
<dbReference type="Ensembl" id="ENSMUST00000108563.9">
    <molecule id="Q8C0R7-2"/>
    <property type="protein sequence ID" value="ENSMUSP00000104203.3"/>
    <property type="gene ID" value="ENSMUSG00000040829.15"/>
</dbReference>
<dbReference type="GeneID" id="574428"/>
<dbReference type="KEGG" id="mmu:574428"/>
<dbReference type="UCSC" id="uc007juy.1">
    <molecule id="Q8C0R7-1"/>
    <property type="organism name" value="mouse"/>
</dbReference>
<dbReference type="UCSC" id="uc007juz.1">
    <molecule id="Q8C0R7-2"/>
    <property type="organism name" value="mouse"/>
</dbReference>
<dbReference type="AGR" id="MGI:3603821"/>
<dbReference type="CTD" id="84225"/>
<dbReference type="MGI" id="MGI:3603821">
    <property type="gene designation" value="Zmynd15"/>
</dbReference>
<dbReference type="VEuPathDB" id="HostDB:ENSMUSG00000040829"/>
<dbReference type="eggNOG" id="KOG2084">
    <property type="taxonomic scope" value="Eukaryota"/>
</dbReference>
<dbReference type="GeneTree" id="ENSGT00390000000527"/>
<dbReference type="HOGENOM" id="CLU_022430_0_0_1"/>
<dbReference type="InParanoid" id="Q8C0R7"/>
<dbReference type="OMA" id="FTECSAY"/>
<dbReference type="OrthoDB" id="5282002at2759"/>
<dbReference type="PhylomeDB" id="Q8C0R7"/>
<dbReference type="TreeFam" id="TF336410"/>
<dbReference type="BioGRID-ORCS" id="574428">
    <property type="hits" value="1 hit in 78 CRISPR screens"/>
</dbReference>
<dbReference type="ChiTaRS" id="Cxcl16">
    <property type="organism name" value="mouse"/>
</dbReference>
<dbReference type="PRO" id="PR:Q8C0R7"/>
<dbReference type="Proteomes" id="UP000000589">
    <property type="component" value="Chromosome 11"/>
</dbReference>
<dbReference type="RNAct" id="Q8C0R7">
    <property type="molecule type" value="protein"/>
</dbReference>
<dbReference type="Bgee" id="ENSMUSG00000040829">
    <property type="expression patterns" value="Expressed in spermatid and 74 other cell types or tissues"/>
</dbReference>
<dbReference type="ExpressionAtlas" id="Q8C0R7">
    <property type="expression patterns" value="baseline and differential"/>
</dbReference>
<dbReference type="GO" id="GO:0005737">
    <property type="term" value="C:cytoplasm"/>
    <property type="evidence" value="ECO:0000314"/>
    <property type="project" value="MGI"/>
</dbReference>
<dbReference type="GO" id="GO:0001673">
    <property type="term" value="C:male germ cell nucleus"/>
    <property type="evidence" value="ECO:0000314"/>
    <property type="project" value="MGI"/>
</dbReference>
<dbReference type="GO" id="GO:0042826">
    <property type="term" value="F:histone deacetylase binding"/>
    <property type="evidence" value="ECO:0000314"/>
    <property type="project" value="MGI"/>
</dbReference>
<dbReference type="GO" id="GO:0008270">
    <property type="term" value="F:zinc ion binding"/>
    <property type="evidence" value="ECO:0007669"/>
    <property type="project" value="UniProtKB-KW"/>
</dbReference>
<dbReference type="GO" id="GO:0045892">
    <property type="term" value="P:negative regulation of DNA-templated transcription"/>
    <property type="evidence" value="ECO:0000314"/>
    <property type="project" value="MGI"/>
</dbReference>
<dbReference type="GO" id="GO:0007286">
    <property type="term" value="P:spermatid development"/>
    <property type="evidence" value="ECO:0000315"/>
    <property type="project" value="MGI"/>
</dbReference>
<dbReference type="Gene3D" id="6.10.140.2220">
    <property type="match status" value="1"/>
</dbReference>
<dbReference type="InterPro" id="IPR046824">
    <property type="entry name" value="Mss51-like_C"/>
</dbReference>
<dbReference type="InterPro" id="IPR042989">
    <property type="entry name" value="ZMY15"/>
</dbReference>
<dbReference type="InterPro" id="IPR002893">
    <property type="entry name" value="Znf_MYND"/>
</dbReference>
<dbReference type="PANTHER" id="PTHR47085">
    <property type="entry name" value="ZINC FINGER MYND DOMAIN-CONTAINING PROTEIN 15"/>
    <property type="match status" value="1"/>
</dbReference>
<dbReference type="PANTHER" id="PTHR47085:SF1">
    <property type="entry name" value="ZINC FINGER MYND DOMAIN-CONTAINING PROTEIN 15"/>
    <property type="match status" value="1"/>
</dbReference>
<dbReference type="Pfam" id="PF20179">
    <property type="entry name" value="MSS51_C"/>
    <property type="match status" value="1"/>
</dbReference>
<dbReference type="Pfam" id="PF01753">
    <property type="entry name" value="zf-MYND"/>
    <property type="match status" value="1"/>
</dbReference>
<dbReference type="SUPFAM" id="SSF144232">
    <property type="entry name" value="HIT/MYND zinc finger-like"/>
    <property type="match status" value="1"/>
</dbReference>
<dbReference type="PROSITE" id="PS50865">
    <property type="entry name" value="ZF_MYND_2"/>
    <property type="match status" value="1"/>
</dbReference>
<gene>
    <name type="primary">Zmynd15</name>
</gene>
<sequence length="736" mass="81604">MEFVSGYRDEFLDFAALLFGWFRKFVAERGTMGTSLEGRWRQLESQIRRLPQDPALWVLHVLPNRSVGISLGQGAEPGPGPGLGASRLLGDEPPLHLRDLSPYVSFVSLEDGEEGEEEEEDEEHGERPGMEKVEPQEGGEPAPPSKRFPQEAKPAPESEVTQQEASREEGSREERPEDERAPEKRKGQKNAEAAPLHLSCLLLVTDEHGTILGIDLLMDGAQGSVGQNPGTENLAPRAYALLCHSMACPMGSGDPRKPRQLTVGDAHLHRELESLVPRLGVKLAKTPMRTWGPRPGFTFASLRARTCHVCHKHSFEVKLTPCPQCSAVLYCGEACLQADWRRCPDDVSHRFWCPRLSAFMERVGELASLPFTYTAEVTSETFNKEAFLASRGLTRGYWTQLSMLIPGPGAPRYPWGSTSSLSCLLNGDPYQLLQGDGPALMPPVPLEPPRSLFGSWQDYYTWRGLSLDSPMAVLLTYPLTVYYVITHLVPQSFPELNIQNKQSLKIHVVEAGKEFDLVMVFWELLVLLPHVALELQFVGDSLPPESDQQHFTMQRDGPEVSLRPGSGVSARFNSGTKEKGGRRDLQIRVSARPYHLLQGPKPDLVIGFNSGFGLKDTWLSSLPRLQSLRVPAFFTESSEYGCVMDDQTMAVATGGGTSSPQPNPFRSPFRLRAADNCMPWYCNAFIFHLVYKPPQGGTVRSAPGPAPRPPTPAAPPVPARRRRGEKKAARGPRRRR</sequence>
<protein>
    <recommendedName>
        <fullName>Zinc finger MYND domain-containing protein 15</fullName>
    </recommendedName>
</protein>
<comment type="function">
    <text evidence="3">Acts as a transcriptional repressor through interaction with histone deacetylases (HDACs). May regulate haploid genes important for spermiogenesis.</text>
</comment>
<comment type="subunit">
    <text evidence="3">Interacts with HDAC1, HDAC3, HDAC6 and, to a lesser extent, with HDAC7.</text>
</comment>
<comment type="subcellular location">
    <subcellularLocation>
        <location evidence="3">Nucleus</location>
    </subcellularLocation>
    <subcellularLocation>
        <location evidence="3">Cytoplasm</location>
    </subcellularLocation>
    <text>In step 9-11 spermatids, shifts from nucleus to cytoplasm.</text>
</comment>
<comment type="alternative products">
    <event type="alternative splicing"/>
    <isoform>
        <id>Q8C0R7-1</id>
        <name>1</name>
        <sequence type="displayed"/>
    </isoform>
    <isoform>
        <id>Q8C0R7-2</id>
        <name>2</name>
        <sequence type="described" ref="VSP_042145 VSP_042146"/>
    </isoform>
</comment>
<comment type="tissue specificity">
    <text evidence="3">Testis-specific. Expressed in pachytene spermatocytes and all developing spermatids, but not in Sertoli, nor Leydig cells (at protein level).</text>
</comment>
<comment type="developmental stage">
    <text>At the mRNA level, first detected in early pachytene spermatocytes. At the protein level, first detected in step 2 round spermatids. Expression continuously increases thereafter and peaks in spermatids at steps 7-9 (at protein level). Levels start to decrease after step 9 and in step 9-11 elongating spermatids (at protein level).</text>
</comment>
<comment type="disruption phenotype">
    <text evidence="3">Since CXCL16 and ZMYND15 genes overlap in their 5'UTRs, CXCL16 knockout also disrupts the ZMYND15 gene. The double knockout mice display severe depletion of late spermatids and are thus infertile. This phenotype is probably due to ZMYND15, rather than CXCL16, deficiency.</text>
</comment>
<organism>
    <name type="scientific">Mus musculus</name>
    <name type="common">Mouse</name>
    <dbReference type="NCBI Taxonomy" id="10090"/>
    <lineage>
        <taxon>Eukaryota</taxon>
        <taxon>Metazoa</taxon>
        <taxon>Chordata</taxon>
        <taxon>Craniata</taxon>
        <taxon>Vertebrata</taxon>
        <taxon>Euteleostomi</taxon>
        <taxon>Mammalia</taxon>
        <taxon>Eutheria</taxon>
        <taxon>Euarchontoglires</taxon>
        <taxon>Glires</taxon>
        <taxon>Rodentia</taxon>
        <taxon>Myomorpha</taxon>
        <taxon>Muroidea</taxon>
        <taxon>Muridae</taxon>
        <taxon>Murinae</taxon>
        <taxon>Mus</taxon>
        <taxon>Mus</taxon>
    </lineage>
</organism>
<keyword id="KW-0025">Alternative splicing</keyword>
<keyword id="KW-0963">Cytoplasm</keyword>
<keyword id="KW-0221">Differentiation</keyword>
<keyword id="KW-0479">Metal-binding</keyword>
<keyword id="KW-0539">Nucleus</keyword>
<keyword id="KW-1185">Reference proteome</keyword>
<keyword id="KW-0744">Spermatogenesis</keyword>
<keyword id="KW-0804">Transcription</keyword>
<keyword id="KW-0805">Transcription regulation</keyword>
<keyword id="KW-0862">Zinc</keyword>
<keyword id="KW-0863">Zinc-finger</keyword>
<proteinExistence type="evidence at protein level"/>
<accession>Q8C0R7</accession>
<accession>Q3TAD1</accession>
<reference key="1">
    <citation type="journal article" date="2005" name="Science">
        <title>The transcriptional landscape of the mammalian genome.</title>
        <authorList>
            <person name="Carninci P."/>
            <person name="Kasukawa T."/>
            <person name="Katayama S."/>
            <person name="Gough J."/>
            <person name="Frith M.C."/>
            <person name="Maeda N."/>
            <person name="Oyama R."/>
            <person name="Ravasi T."/>
            <person name="Lenhard B."/>
            <person name="Wells C."/>
            <person name="Kodzius R."/>
            <person name="Shimokawa K."/>
            <person name="Bajic V.B."/>
            <person name="Brenner S.E."/>
            <person name="Batalov S."/>
            <person name="Forrest A.R."/>
            <person name="Zavolan M."/>
            <person name="Davis M.J."/>
            <person name="Wilming L.G."/>
            <person name="Aidinis V."/>
            <person name="Allen J.E."/>
            <person name="Ambesi-Impiombato A."/>
            <person name="Apweiler R."/>
            <person name="Aturaliya R.N."/>
            <person name="Bailey T.L."/>
            <person name="Bansal M."/>
            <person name="Baxter L."/>
            <person name="Beisel K.W."/>
            <person name="Bersano T."/>
            <person name="Bono H."/>
            <person name="Chalk A.M."/>
            <person name="Chiu K.P."/>
            <person name="Choudhary V."/>
            <person name="Christoffels A."/>
            <person name="Clutterbuck D.R."/>
            <person name="Crowe M.L."/>
            <person name="Dalla E."/>
            <person name="Dalrymple B.P."/>
            <person name="de Bono B."/>
            <person name="Della Gatta G."/>
            <person name="di Bernardo D."/>
            <person name="Down T."/>
            <person name="Engstrom P."/>
            <person name="Fagiolini M."/>
            <person name="Faulkner G."/>
            <person name="Fletcher C.F."/>
            <person name="Fukushima T."/>
            <person name="Furuno M."/>
            <person name="Futaki S."/>
            <person name="Gariboldi M."/>
            <person name="Georgii-Hemming P."/>
            <person name="Gingeras T.R."/>
            <person name="Gojobori T."/>
            <person name="Green R.E."/>
            <person name="Gustincich S."/>
            <person name="Harbers M."/>
            <person name="Hayashi Y."/>
            <person name="Hensch T.K."/>
            <person name="Hirokawa N."/>
            <person name="Hill D."/>
            <person name="Huminiecki L."/>
            <person name="Iacono M."/>
            <person name="Ikeo K."/>
            <person name="Iwama A."/>
            <person name="Ishikawa T."/>
            <person name="Jakt M."/>
            <person name="Kanapin A."/>
            <person name="Katoh M."/>
            <person name="Kawasawa Y."/>
            <person name="Kelso J."/>
            <person name="Kitamura H."/>
            <person name="Kitano H."/>
            <person name="Kollias G."/>
            <person name="Krishnan S.P."/>
            <person name="Kruger A."/>
            <person name="Kummerfeld S.K."/>
            <person name="Kurochkin I.V."/>
            <person name="Lareau L.F."/>
            <person name="Lazarevic D."/>
            <person name="Lipovich L."/>
            <person name="Liu J."/>
            <person name="Liuni S."/>
            <person name="McWilliam S."/>
            <person name="Madan Babu M."/>
            <person name="Madera M."/>
            <person name="Marchionni L."/>
            <person name="Matsuda H."/>
            <person name="Matsuzawa S."/>
            <person name="Miki H."/>
            <person name="Mignone F."/>
            <person name="Miyake S."/>
            <person name="Morris K."/>
            <person name="Mottagui-Tabar S."/>
            <person name="Mulder N."/>
            <person name="Nakano N."/>
            <person name="Nakauchi H."/>
            <person name="Ng P."/>
            <person name="Nilsson R."/>
            <person name="Nishiguchi S."/>
            <person name="Nishikawa S."/>
            <person name="Nori F."/>
            <person name="Ohara O."/>
            <person name="Okazaki Y."/>
            <person name="Orlando V."/>
            <person name="Pang K.C."/>
            <person name="Pavan W.J."/>
            <person name="Pavesi G."/>
            <person name="Pesole G."/>
            <person name="Petrovsky N."/>
            <person name="Piazza S."/>
            <person name="Reed J."/>
            <person name="Reid J.F."/>
            <person name="Ring B.Z."/>
            <person name="Ringwald M."/>
            <person name="Rost B."/>
            <person name="Ruan Y."/>
            <person name="Salzberg S.L."/>
            <person name="Sandelin A."/>
            <person name="Schneider C."/>
            <person name="Schoenbach C."/>
            <person name="Sekiguchi K."/>
            <person name="Semple C.A."/>
            <person name="Seno S."/>
            <person name="Sessa L."/>
            <person name="Sheng Y."/>
            <person name="Shibata Y."/>
            <person name="Shimada H."/>
            <person name="Shimada K."/>
            <person name="Silva D."/>
            <person name="Sinclair B."/>
            <person name="Sperling S."/>
            <person name="Stupka E."/>
            <person name="Sugiura K."/>
            <person name="Sultana R."/>
            <person name="Takenaka Y."/>
            <person name="Taki K."/>
            <person name="Tammoja K."/>
            <person name="Tan S.L."/>
            <person name="Tang S."/>
            <person name="Taylor M.S."/>
            <person name="Tegner J."/>
            <person name="Teichmann S.A."/>
            <person name="Ueda H.R."/>
            <person name="van Nimwegen E."/>
            <person name="Verardo R."/>
            <person name="Wei C.L."/>
            <person name="Yagi K."/>
            <person name="Yamanishi H."/>
            <person name="Zabarovsky E."/>
            <person name="Zhu S."/>
            <person name="Zimmer A."/>
            <person name="Hide W."/>
            <person name="Bult C."/>
            <person name="Grimmond S.M."/>
            <person name="Teasdale R.D."/>
            <person name="Liu E.T."/>
            <person name="Brusic V."/>
            <person name="Quackenbush J."/>
            <person name="Wahlestedt C."/>
            <person name="Mattick J.S."/>
            <person name="Hume D.A."/>
            <person name="Kai C."/>
            <person name="Sasaki D."/>
            <person name="Tomaru Y."/>
            <person name="Fukuda S."/>
            <person name="Kanamori-Katayama M."/>
            <person name="Suzuki M."/>
            <person name="Aoki J."/>
            <person name="Arakawa T."/>
            <person name="Iida J."/>
            <person name="Imamura K."/>
            <person name="Itoh M."/>
            <person name="Kato T."/>
            <person name="Kawaji H."/>
            <person name="Kawagashira N."/>
            <person name="Kawashima T."/>
            <person name="Kojima M."/>
            <person name="Kondo S."/>
            <person name="Konno H."/>
            <person name="Nakano K."/>
            <person name="Ninomiya N."/>
            <person name="Nishio T."/>
            <person name="Okada M."/>
            <person name="Plessy C."/>
            <person name="Shibata K."/>
            <person name="Shiraki T."/>
            <person name="Suzuki S."/>
            <person name="Tagami M."/>
            <person name="Waki K."/>
            <person name="Watahiki A."/>
            <person name="Okamura-Oho Y."/>
            <person name="Suzuki H."/>
            <person name="Kawai J."/>
            <person name="Hayashizaki Y."/>
        </authorList>
    </citation>
    <scope>NUCLEOTIDE SEQUENCE [LARGE SCALE MRNA] (ISOFORMS 1 AND 2)</scope>
    <source>
        <strain>C57BL/6J</strain>
        <strain>NOD</strain>
        <tissue>Spleen</tissue>
        <tissue>Testis</tissue>
    </source>
</reference>
<reference key="2">
    <citation type="journal article" date="2009" name="PLoS Biol.">
        <title>Lineage-specific biology revealed by a finished genome assembly of the mouse.</title>
        <authorList>
            <person name="Church D.M."/>
            <person name="Goodstadt L."/>
            <person name="Hillier L.W."/>
            <person name="Zody M.C."/>
            <person name="Goldstein S."/>
            <person name="She X."/>
            <person name="Bult C.J."/>
            <person name="Agarwala R."/>
            <person name="Cherry J.L."/>
            <person name="DiCuccio M."/>
            <person name="Hlavina W."/>
            <person name="Kapustin Y."/>
            <person name="Meric P."/>
            <person name="Maglott D."/>
            <person name="Birtle Z."/>
            <person name="Marques A.C."/>
            <person name="Graves T."/>
            <person name="Zhou S."/>
            <person name="Teague B."/>
            <person name="Potamousis K."/>
            <person name="Churas C."/>
            <person name="Place M."/>
            <person name="Herschleb J."/>
            <person name="Runnheim R."/>
            <person name="Forrest D."/>
            <person name="Amos-Landgraf J."/>
            <person name="Schwartz D.C."/>
            <person name="Cheng Z."/>
            <person name="Lindblad-Toh K."/>
            <person name="Eichler E.E."/>
            <person name="Ponting C.P."/>
        </authorList>
    </citation>
    <scope>NUCLEOTIDE SEQUENCE [LARGE SCALE GENOMIC DNA]</scope>
    <source>
        <strain>C57BL/6J</strain>
    </source>
</reference>
<reference key="3">
    <citation type="journal article" date="2004" name="Genome Res.">
        <title>The status, quality, and expansion of the NIH full-length cDNA project: the Mammalian Gene Collection (MGC).</title>
        <authorList>
            <consortium name="The MGC Project Team"/>
        </authorList>
    </citation>
    <scope>NUCLEOTIDE SEQUENCE [LARGE SCALE MRNA] (ISOFORM 1)</scope>
</reference>
<reference key="4">
    <citation type="journal article" date="2010" name="J. Biol. Chem.">
        <title>Zmynd15 encodes a histone deacetylase-dependent transcriptional repressor essential for spermiogenesis and male fertility.</title>
        <authorList>
            <person name="Yan W."/>
            <person name="Si Y."/>
            <person name="Slaymaker S."/>
            <person name="Li J."/>
            <person name="Zheng H."/>
            <person name="Young D.L."/>
            <person name="Aslanian A."/>
            <person name="Saunders L."/>
            <person name="Verdin E."/>
            <person name="Charo I.F."/>
        </authorList>
    </citation>
    <scope>FUNCTION</scope>
    <scope>INTERACTION WITH HDAC1; HDAC3; HDAC6 AND HDAC7</scope>
    <scope>SUBCELLULAR LOCATION</scope>
    <scope>TISSUE SPECIFICITY</scope>
    <scope>DISRUPTION PHENOTYPE</scope>
</reference>